<organism>
    <name type="scientific">Mycobacterium leprae (strain TN)</name>
    <dbReference type="NCBI Taxonomy" id="272631"/>
    <lineage>
        <taxon>Bacteria</taxon>
        <taxon>Bacillati</taxon>
        <taxon>Actinomycetota</taxon>
        <taxon>Actinomycetes</taxon>
        <taxon>Mycobacteriales</taxon>
        <taxon>Mycobacteriaceae</taxon>
        <taxon>Mycobacterium</taxon>
    </lineage>
</organism>
<comment type="function">
    <text evidence="1">Involved in the gluconeogenesis. Catalyzes stereospecifically the conversion of dihydroxyacetone phosphate (DHAP) to D-glyceraldehyde-3-phosphate (G3P).</text>
</comment>
<comment type="catalytic activity">
    <reaction evidence="1">
        <text>D-glyceraldehyde 3-phosphate = dihydroxyacetone phosphate</text>
        <dbReference type="Rhea" id="RHEA:18585"/>
        <dbReference type="ChEBI" id="CHEBI:57642"/>
        <dbReference type="ChEBI" id="CHEBI:59776"/>
        <dbReference type="EC" id="5.3.1.1"/>
    </reaction>
</comment>
<comment type="pathway">
    <text evidence="1">Carbohydrate biosynthesis; gluconeogenesis.</text>
</comment>
<comment type="pathway">
    <text evidence="1">Carbohydrate degradation; glycolysis; D-glyceraldehyde 3-phosphate from glycerone phosphate: step 1/1.</text>
</comment>
<comment type="subunit">
    <text evidence="1">Homodimer.</text>
</comment>
<comment type="subcellular location">
    <subcellularLocation>
        <location evidence="1">Cytoplasm</location>
    </subcellularLocation>
</comment>
<comment type="similarity">
    <text evidence="1">Belongs to the triosephosphate isomerase family.</text>
</comment>
<reference key="1">
    <citation type="submission" date="1994-03" db="EMBL/GenBank/DDBJ databases">
        <authorList>
            <person name="Smith D.R."/>
            <person name="Robison K."/>
        </authorList>
    </citation>
    <scope>NUCLEOTIDE SEQUENCE [GENOMIC DNA]</scope>
</reference>
<reference key="2">
    <citation type="journal article" date="2001" name="Nature">
        <title>Massive gene decay in the leprosy bacillus.</title>
        <authorList>
            <person name="Cole S.T."/>
            <person name="Eiglmeier K."/>
            <person name="Parkhill J."/>
            <person name="James K.D."/>
            <person name="Thomson N.R."/>
            <person name="Wheeler P.R."/>
            <person name="Honore N."/>
            <person name="Garnier T."/>
            <person name="Churcher C.M."/>
            <person name="Harris D.E."/>
            <person name="Mungall K.L."/>
            <person name="Basham D."/>
            <person name="Brown D."/>
            <person name="Chillingworth T."/>
            <person name="Connor R."/>
            <person name="Davies R.M."/>
            <person name="Devlin K."/>
            <person name="Duthoy S."/>
            <person name="Feltwell T."/>
            <person name="Fraser A."/>
            <person name="Hamlin N."/>
            <person name="Holroyd S."/>
            <person name="Hornsby T."/>
            <person name="Jagels K."/>
            <person name="Lacroix C."/>
            <person name="Maclean J."/>
            <person name="Moule S."/>
            <person name="Murphy L.D."/>
            <person name="Oliver K."/>
            <person name="Quail M.A."/>
            <person name="Rajandream M.A."/>
            <person name="Rutherford K.M."/>
            <person name="Rutter S."/>
            <person name="Seeger K."/>
            <person name="Simon S."/>
            <person name="Simmonds M."/>
            <person name="Skelton J."/>
            <person name="Squares R."/>
            <person name="Squares S."/>
            <person name="Stevens K."/>
            <person name="Taylor K."/>
            <person name="Whitehead S."/>
            <person name="Woodward J.R."/>
            <person name="Barrell B.G."/>
        </authorList>
    </citation>
    <scope>NUCLEOTIDE SEQUENCE [LARGE SCALE GENOMIC DNA]</scope>
    <source>
        <strain>TN</strain>
    </source>
</reference>
<dbReference type="EC" id="5.3.1.1" evidence="1"/>
<dbReference type="EMBL" id="U00013">
    <property type="protein sequence ID" value="AAA17115.1"/>
    <property type="molecule type" value="Genomic_DNA"/>
</dbReference>
<dbReference type="EMBL" id="AL583919">
    <property type="protein sequence ID" value="CAC30080.1"/>
    <property type="molecule type" value="Genomic_DNA"/>
</dbReference>
<dbReference type="PIR" id="S72750">
    <property type="entry name" value="S72750"/>
</dbReference>
<dbReference type="RefSeq" id="NP_301484.1">
    <property type="nucleotide sequence ID" value="NC_002677.1"/>
</dbReference>
<dbReference type="RefSeq" id="WP_010907808.1">
    <property type="nucleotide sequence ID" value="NC_002677.1"/>
</dbReference>
<dbReference type="SMR" id="P46711"/>
<dbReference type="STRING" id="272631.gene:17574393"/>
<dbReference type="KEGG" id="mle:ML0572"/>
<dbReference type="PATRIC" id="fig|272631.5.peg.1000"/>
<dbReference type="Leproma" id="ML0572"/>
<dbReference type="eggNOG" id="COG0149">
    <property type="taxonomic scope" value="Bacteria"/>
</dbReference>
<dbReference type="HOGENOM" id="CLU_024251_2_3_11"/>
<dbReference type="OrthoDB" id="9809429at2"/>
<dbReference type="UniPathway" id="UPA00109">
    <property type="reaction ID" value="UER00189"/>
</dbReference>
<dbReference type="UniPathway" id="UPA00138"/>
<dbReference type="Proteomes" id="UP000000806">
    <property type="component" value="Chromosome"/>
</dbReference>
<dbReference type="GO" id="GO:0005829">
    <property type="term" value="C:cytosol"/>
    <property type="evidence" value="ECO:0007669"/>
    <property type="project" value="TreeGrafter"/>
</dbReference>
<dbReference type="GO" id="GO:0004807">
    <property type="term" value="F:triose-phosphate isomerase activity"/>
    <property type="evidence" value="ECO:0007669"/>
    <property type="project" value="UniProtKB-UniRule"/>
</dbReference>
<dbReference type="GO" id="GO:0006094">
    <property type="term" value="P:gluconeogenesis"/>
    <property type="evidence" value="ECO:0007669"/>
    <property type="project" value="UniProtKB-UniRule"/>
</dbReference>
<dbReference type="GO" id="GO:0046166">
    <property type="term" value="P:glyceraldehyde-3-phosphate biosynthetic process"/>
    <property type="evidence" value="ECO:0007669"/>
    <property type="project" value="TreeGrafter"/>
</dbReference>
<dbReference type="GO" id="GO:0019563">
    <property type="term" value="P:glycerol catabolic process"/>
    <property type="evidence" value="ECO:0007669"/>
    <property type="project" value="TreeGrafter"/>
</dbReference>
<dbReference type="GO" id="GO:0006096">
    <property type="term" value="P:glycolytic process"/>
    <property type="evidence" value="ECO:0007669"/>
    <property type="project" value="UniProtKB-UniRule"/>
</dbReference>
<dbReference type="CDD" id="cd00311">
    <property type="entry name" value="TIM"/>
    <property type="match status" value="1"/>
</dbReference>
<dbReference type="FunFam" id="3.20.20.70:FF:000020">
    <property type="entry name" value="Triosephosphate isomerase"/>
    <property type="match status" value="1"/>
</dbReference>
<dbReference type="Gene3D" id="3.20.20.70">
    <property type="entry name" value="Aldolase class I"/>
    <property type="match status" value="1"/>
</dbReference>
<dbReference type="HAMAP" id="MF_00147_B">
    <property type="entry name" value="TIM_B"/>
    <property type="match status" value="1"/>
</dbReference>
<dbReference type="InterPro" id="IPR013785">
    <property type="entry name" value="Aldolase_TIM"/>
</dbReference>
<dbReference type="InterPro" id="IPR035990">
    <property type="entry name" value="TIM_sf"/>
</dbReference>
<dbReference type="InterPro" id="IPR022896">
    <property type="entry name" value="TrioseP_Isoase_bac/euk"/>
</dbReference>
<dbReference type="InterPro" id="IPR000652">
    <property type="entry name" value="Triosephosphate_isomerase"/>
</dbReference>
<dbReference type="InterPro" id="IPR020861">
    <property type="entry name" value="Triosephosphate_isomerase_AS"/>
</dbReference>
<dbReference type="NCBIfam" id="TIGR00419">
    <property type="entry name" value="tim"/>
    <property type="match status" value="1"/>
</dbReference>
<dbReference type="PANTHER" id="PTHR21139">
    <property type="entry name" value="TRIOSEPHOSPHATE ISOMERASE"/>
    <property type="match status" value="1"/>
</dbReference>
<dbReference type="PANTHER" id="PTHR21139:SF42">
    <property type="entry name" value="TRIOSEPHOSPHATE ISOMERASE"/>
    <property type="match status" value="1"/>
</dbReference>
<dbReference type="Pfam" id="PF00121">
    <property type="entry name" value="TIM"/>
    <property type="match status" value="1"/>
</dbReference>
<dbReference type="SUPFAM" id="SSF51351">
    <property type="entry name" value="Triosephosphate isomerase (TIM)"/>
    <property type="match status" value="1"/>
</dbReference>
<dbReference type="PROSITE" id="PS00171">
    <property type="entry name" value="TIM_1"/>
    <property type="match status" value="1"/>
</dbReference>
<dbReference type="PROSITE" id="PS51440">
    <property type="entry name" value="TIM_2"/>
    <property type="match status" value="1"/>
</dbReference>
<sequence length="261" mass="27557">MSRKSLIAGNWKMNLNHFEAIALVQKIAFSLPDKYYDKVDVTVLPPFTDLRSVQTLVDGDKLRLTYGAQDLSQHDLGAYTGDISGAFLAKLGCSFVLVGHSERRTYHDEGDALVAAKTAAALKNSLTPIVCIGEYLEIREVGEHVSHCQNQLRGSLAGLSPEQIGNVVIVYEPVWAIGTGRVASAADAQEVCEAIRKELGALASPQVAETVRVLYGGSLNAKNIGDIVAQQDVDGGLVGGASLDGAQFATLAVIAAGGPLP</sequence>
<proteinExistence type="inferred from homology"/>
<gene>
    <name evidence="1" type="primary">tpiA</name>
    <name type="synonym">tpi</name>
    <name type="ordered locus">ML0572</name>
    <name type="ORF">B1496_C1_127</name>
</gene>
<evidence type="ECO:0000255" key="1">
    <source>
        <dbReference type="HAMAP-Rule" id="MF_00147"/>
    </source>
</evidence>
<protein>
    <recommendedName>
        <fullName evidence="1">Triosephosphate isomerase</fullName>
        <shortName evidence="1">TIM</shortName>
        <shortName evidence="1">TPI</shortName>
        <ecNumber evidence="1">5.3.1.1</ecNumber>
    </recommendedName>
    <alternativeName>
        <fullName evidence="1">Triose-phosphate isomerase</fullName>
    </alternativeName>
</protein>
<name>TPIS_MYCLE</name>
<accession>P46711</accession>
<keyword id="KW-0963">Cytoplasm</keyword>
<keyword id="KW-0312">Gluconeogenesis</keyword>
<keyword id="KW-0324">Glycolysis</keyword>
<keyword id="KW-0413">Isomerase</keyword>
<keyword id="KW-1185">Reference proteome</keyword>
<feature type="chain" id="PRO_0000090251" description="Triosephosphate isomerase">
    <location>
        <begin position="1"/>
        <end position="261"/>
    </location>
</feature>
<feature type="active site" description="Electrophile" evidence="1">
    <location>
        <position position="100"/>
    </location>
</feature>
<feature type="active site" description="Proton acceptor" evidence="1">
    <location>
        <position position="172"/>
    </location>
</feature>
<feature type="binding site" evidence="1">
    <location>
        <begin position="10"/>
        <end position="12"/>
    </location>
    <ligand>
        <name>substrate</name>
    </ligand>
</feature>
<feature type="binding site" evidence="1">
    <location>
        <position position="178"/>
    </location>
    <ligand>
        <name>substrate</name>
    </ligand>
</feature>
<feature type="binding site" evidence="1">
    <location>
        <position position="218"/>
    </location>
    <ligand>
        <name>substrate</name>
    </ligand>
</feature>
<feature type="binding site" evidence="1">
    <location>
        <begin position="239"/>
        <end position="240"/>
    </location>
    <ligand>
        <name>substrate</name>
    </ligand>
</feature>